<comment type="function">
    <text evidence="1">Specifically methylates the uridine in position 2552 of 23S rRNA at the 2'-O position of the ribose in the fully assembled 50S ribosomal subunit.</text>
</comment>
<comment type="catalytic activity">
    <reaction evidence="1">
        <text>uridine(2552) in 23S rRNA + S-adenosyl-L-methionine = 2'-O-methyluridine(2552) in 23S rRNA + S-adenosyl-L-homocysteine + H(+)</text>
        <dbReference type="Rhea" id="RHEA:42720"/>
        <dbReference type="Rhea" id="RHEA-COMP:10202"/>
        <dbReference type="Rhea" id="RHEA-COMP:10203"/>
        <dbReference type="ChEBI" id="CHEBI:15378"/>
        <dbReference type="ChEBI" id="CHEBI:57856"/>
        <dbReference type="ChEBI" id="CHEBI:59789"/>
        <dbReference type="ChEBI" id="CHEBI:65315"/>
        <dbReference type="ChEBI" id="CHEBI:74478"/>
        <dbReference type="EC" id="2.1.1.166"/>
    </reaction>
</comment>
<comment type="subcellular location">
    <subcellularLocation>
        <location evidence="1">Cytoplasm</location>
    </subcellularLocation>
</comment>
<comment type="similarity">
    <text evidence="1">Belongs to the class I-like SAM-binding methyltransferase superfamily. RNA methyltransferase RlmE family.</text>
</comment>
<evidence type="ECO:0000255" key="1">
    <source>
        <dbReference type="HAMAP-Rule" id="MF_01547"/>
    </source>
</evidence>
<feature type="chain" id="PRO_1000087709" description="Ribosomal RNA large subunit methyltransferase E">
    <location>
        <begin position="1"/>
        <end position="208"/>
    </location>
</feature>
<feature type="active site" description="Proton acceptor" evidence="1">
    <location>
        <position position="164"/>
    </location>
</feature>
<feature type="binding site" evidence="1">
    <location>
        <position position="63"/>
    </location>
    <ligand>
        <name>S-adenosyl-L-methionine</name>
        <dbReference type="ChEBI" id="CHEBI:59789"/>
    </ligand>
</feature>
<feature type="binding site" evidence="1">
    <location>
        <position position="65"/>
    </location>
    <ligand>
        <name>S-adenosyl-L-methionine</name>
        <dbReference type="ChEBI" id="CHEBI:59789"/>
    </ligand>
</feature>
<feature type="binding site" evidence="1">
    <location>
        <position position="83"/>
    </location>
    <ligand>
        <name>S-adenosyl-L-methionine</name>
        <dbReference type="ChEBI" id="CHEBI:59789"/>
    </ligand>
</feature>
<feature type="binding site" evidence="1">
    <location>
        <position position="99"/>
    </location>
    <ligand>
        <name>S-adenosyl-L-methionine</name>
        <dbReference type="ChEBI" id="CHEBI:59789"/>
    </ligand>
</feature>
<feature type="binding site" evidence="1">
    <location>
        <position position="124"/>
    </location>
    <ligand>
        <name>S-adenosyl-L-methionine</name>
        <dbReference type="ChEBI" id="CHEBI:59789"/>
    </ligand>
</feature>
<accession>A9MP28</accession>
<protein>
    <recommendedName>
        <fullName evidence="1">Ribosomal RNA large subunit methyltransferase E</fullName>
        <ecNumber evidence="1">2.1.1.166</ecNumber>
    </recommendedName>
    <alternativeName>
        <fullName evidence="1">23S rRNA Um2552 methyltransferase</fullName>
    </alternativeName>
    <alternativeName>
        <fullName evidence="1">rRNA (uridine-2'-O-)-methyltransferase</fullName>
    </alternativeName>
</protein>
<keyword id="KW-0963">Cytoplasm</keyword>
<keyword id="KW-0489">Methyltransferase</keyword>
<keyword id="KW-1185">Reference proteome</keyword>
<keyword id="KW-0698">rRNA processing</keyword>
<keyword id="KW-0949">S-adenosyl-L-methionine</keyword>
<keyword id="KW-0808">Transferase</keyword>
<gene>
    <name evidence="1" type="primary">rlmE</name>
    <name evidence="1" type="synonym">ftsJ</name>
    <name evidence="1" type="synonym">rrmJ</name>
    <name type="ordered locus">SARI_04328</name>
</gene>
<organism>
    <name type="scientific">Salmonella arizonae (strain ATCC BAA-731 / CDC346-86 / RSK2980)</name>
    <dbReference type="NCBI Taxonomy" id="41514"/>
    <lineage>
        <taxon>Bacteria</taxon>
        <taxon>Pseudomonadati</taxon>
        <taxon>Pseudomonadota</taxon>
        <taxon>Gammaproteobacteria</taxon>
        <taxon>Enterobacterales</taxon>
        <taxon>Enterobacteriaceae</taxon>
        <taxon>Salmonella</taxon>
    </lineage>
</organism>
<name>RLME_SALAR</name>
<reference key="1">
    <citation type="submission" date="2007-11" db="EMBL/GenBank/DDBJ databases">
        <authorList>
            <consortium name="The Salmonella enterica serovar Arizonae Genome Sequencing Project"/>
            <person name="McClelland M."/>
            <person name="Sanderson E.K."/>
            <person name="Porwollik S."/>
            <person name="Spieth J."/>
            <person name="Clifton W.S."/>
            <person name="Fulton R."/>
            <person name="Chunyan W."/>
            <person name="Wollam A."/>
            <person name="Shah N."/>
            <person name="Pepin K."/>
            <person name="Bhonagiri V."/>
            <person name="Nash W."/>
            <person name="Johnson M."/>
            <person name="Thiruvilangam P."/>
            <person name="Wilson R."/>
        </authorList>
    </citation>
    <scope>NUCLEOTIDE SEQUENCE [LARGE SCALE GENOMIC DNA]</scope>
    <source>
        <strain>ATCC BAA-731 / CDC346-86 / RSK2980</strain>
    </source>
</reference>
<proteinExistence type="inferred from homology"/>
<dbReference type="EC" id="2.1.1.166" evidence="1"/>
<dbReference type="EMBL" id="CP000880">
    <property type="protein sequence ID" value="ABX24110.1"/>
    <property type="molecule type" value="Genomic_DNA"/>
</dbReference>
<dbReference type="SMR" id="A9MP28"/>
<dbReference type="STRING" id="41514.SARI_04328"/>
<dbReference type="KEGG" id="ses:SARI_04328"/>
<dbReference type="HOGENOM" id="CLU_009422_4_0_6"/>
<dbReference type="Proteomes" id="UP000002084">
    <property type="component" value="Chromosome"/>
</dbReference>
<dbReference type="GO" id="GO:0005737">
    <property type="term" value="C:cytoplasm"/>
    <property type="evidence" value="ECO:0007669"/>
    <property type="project" value="UniProtKB-SubCell"/>
</dbReference>
<dbReference type="GO" id="GO:0008650">
    <property type="term" value="F:rRNA (uridine-2'-O-)-methyltransferase activity"/>
    <property type="evidence" value="ECO:0007669"/>
    <property type="project" value="UniProtKB-UniRule"/>
</dbReference>
<dbReference type="FunFam" id="3.40.50.150:FF:000005">
    <property type="entry name" value="Ribosomal RNA large subunit methyltransferase E"/>
    <property type="match status" value="1"/>
</dbReference>
<dbReference type="Gene3D" id="3.40.50.150">
    <property type="entry name" value="Vaccinia Virus protein VP39"/>
    <property type="match status" value="1"/>
</dbReference>
<dbReference type="HAMAP" id="MF_01547">
    <property type="entry name" value="RNA_methyltr_E"/>
    <property type="match status" value="1"/>
</dbReference>
<dbReference type="InterPro" id="IPR050082">
    <property type="entry name" value="RNA_methyltr_RlmE"/>
</dbReference>
<dbReference type="InterPro" id="IPR002877">
    <property type="entry name" value="RNA_MeTrfase_FtsJ_dom"/>
</dbReference>
<dbReference type="InterPro" id="IPR015507">
    <property type="entry name" value="rRNA-MeTfrase_E"/>
</dbReference>
<dbReference type="InterPro" id="IPR004512">
    <property type="entry name" value="rRNA_MeTrfase_gammaproteobac"/>
</dbReference>
<dbReference type="InterPro" id="IPR029063">
    <property type="entry name" value="SAM-dependent_MTases_sf"/>
</dbReference>
<dbReference type="NCBIfam" id="NF008390">
    <property type="entry name" value="PRK11188.1"/>
    <property type="match status" value="1"/>
</dbReference>
<dbReference type="NCBIfam" id="TIGR00438">
    <property type="entry name" value="rrmJ"/>
    <property type="match status" value="1"/>
</dbReference>
<dbReference type="PANTHER" id="PTHR10920">
    <property type="entry name" value="RIBOSOMAL RNA METHYLTRANSFERASE"/>
    <property type="match status" value="1"/>
</dbReference>
<dbReference type="PANTHER" id="PTHR10920:SF18">
    <property type="entry name" value="RRNA METHYLTRANSFERASE 2, MITOCHONDRIAL"/>
    <property type="match status" value="1"/>
</dbReference>
<dbReference type="Pfam" id="PF01728">
    <property type="entry name" value="FtsJ"/>
    <property type="match status" value="1"/>
</dbReference>
<dbReference type="PIRSF" id="PIRSF005461">
    <property type="entry name" value="23S_rRNA_mtase"/>
    <property type="match status" value="1"/>
</dbReference>
<dbReference type="SUPFAM" id="SSF53335">
    <property type="entry name" value="S-adenosyl-L-methionine-dependent methyltransferases"/>
    <property type="match status" value="1"/>
</dbReference>
<sequence length="208" mass="23266">MTGKKRSASSSRWLQEHFSDKYVQQAQKKGLRSRAWFKLDEIQQSDKLFKPGMTVVDLGAAPGGWSQYVVTQIGGRGRIIACDLLPMDPIVGVDFLQGDFRDELVMKALLERVGDSKVQVVMSDMAPNMSGTPAVDIPRAMYLVELALEMCRDVLAPGGSFVVKVFQGEGFDEYLREIRSLFTKVKVRKPDSSRARSREVYIVATGRK</sequence>